<dbReference type="EC" id="2.1.3.3" evidence="2"/>
<dbReference type="EMBL" id="AE004969">
    <property type="protein sequence ID" value="AAW89891.1"/>
    <property type="molecule type" value="Genomic_DNA"/>
</dbReference>
<dbReference type="RefSeq" id="WP_003689682.1">
    <property type="nucleotide sequence ID" value="NC_002946.2"/>
</dbReference>
<dbReference type="RefSeq" id="YP_208303.1">
    <property type="nucleotide sequence ID" value="NC_002946.2"/>
</dbReference>
<dbReference type="SMR" id="Q5F7E6"/>
<dbReference type="STRING" id="242231.NGO_1232"/>
<dbReference type="KEGG" id="ngo:NGO_1232"/>
<dbReference type="PATRIC" id="fig|242231.10.peg.1449"/>
<dbReference type="HOGENOM" id="CLU_043846_3_1_4"/>
<dbReference type="UniPathway" id="UPA00068">
    <property type="reaction ID" value="UER00112"/>
</dbReference>
<dbReference type="Proteomes" id="UP000000535">
    <property type="component" value="Chromosome"/>
</dbReference>
<dbReference type="GO" id="GO:0005737">
    <property type="term" value="C:cytoplasm"/>
    <property type="evidence" value="ECO:0007669"/>
    <property type="project" value="UniProtKB-SubCell"/>
</dbReference>
<dbReference type="GO" id="GO:0016597">
    <property type="term" value="F:amino acid binding"/>
    <property type="evidence" value="ECO:0007669"/>
    <property type="project" value="InterPro"/>
</dbReference>
<dbReference type="GO" id="GO:0004585">
    <property type="term" value="F:ornithine carbamoyltransferase activity"/>
    <property type="evidence" value="ECO:0007669"/>
    <property type="project" value="UniProtKB-UniRule"/>
</dbReference>
<dbReference type="GO" id="GO:0042450">
    <property type="term" value="P:arginine biosynthetic process via ornithine"/>
    <property type="evidence" value="ECO:0007669"/>
    <property type="project" value="TreeGrafter"/>
</dbReference>
<dbReference type="GO" id="GO:0019240">
    <property type="term" value="P:citrulline biosynthetic process"/>
    <property type="evidence" value="ECO:0007669"/>
    <property type="project" value="TreeGrafter"/>
</dbReference>
<dbReference type="GO" id="GO:0006526">
    <property type="term" value="P:L-arginine biosynthetic process"/>
    <property type="evidence" value="ECO:0007669"/>
    <property type="project" value="UniProtKB-UniRule"/>
</dbReference>
<dbReference type="FunFam" id="3.40.50.1370:FF:000004">
    <property type="entry name" value="Ornithine carbamoyltransferase"/>
    <property type="match status" value="1"/>
</dbReference>
<dbReference type="Gene3D" id="3.40.50.1370">
    <property type="entry name" value="Aspartate/ornithine carbamoyltransferase"/>
    <property type="match status" value="2"/>
</dbReference>
<dbReference type="HAMAP" id="MF_01109">
    <property type="entry name" value="OTCase"/>
    <property type="match status" value="1"/>
</dbReference>
<dbReference type="InterPro" id="IPR006132">
    <property type="entry name" value="Asp/Orn_carbamoyltranf_P-bd"/>
</dbReference>
<dbReference type="InterPro" id="IPR006130">
    <property type="entry name" value="Asp/Orn_carbamoylTrfase"/>
</dbReference>
<dbReference type="InterPro" id="IPR036901">
    <property type="entry name" value="Asp/Orn_carbamoylTrfase_sf"/>
</dbReference>
<dbReference type="InterPro" id="IPR006131">
    <property type="entry name" value="Asp_carbamoyltransf_Asp/Orn-bd"/>
</dbReference>
<dbReference type="InterPro" id="IPR002292">
    <property type="entry name" value="Orn/put_carbamltrans"/>
</dbReference>
<dbReference type="InterPro" id="IPR024904">
    <property type="entry name" value="OTCase_ArgI"/>
</dbReference>
<dbReference type="NCBIfam" id="TIGR00658">
    <property type="entry name" value="orni_carb_tr"/>
    <property type="match status" value="1"/>
</dbReference>
<dbReference type="NCBIfam" id="NF002470">
    <property type="entry name" value="PRK01713.1"/>
    <property type="match status" value="1"/>
</dbReference>
<dbReference type="PANTHER" id="PTHR45753:SF2">
    <property type="entry name" value="ORNITHINE CARBAMOYLTRANSFERASE"/>
    <property type="match status" value="1"/>
</dbReference>
<dbReference type="PANTHER" id="PTHR45753">
    <property type="entry name" value="ORNITHINE CARBAMOYLTRANSFERASE, MITOCHONDRIAL"/>
    <property type="match status" value="1"/>
</dbReference>
<dbReference type="Pfam" id="PF00185">
    <property type="entry name" value="OTCace"/>
    <property type="match status" value="1"/>
</dbReference>
<dbReference type="Pfam" id="PF02729">
    <property type="entry name" value="OTCace_N"/>
    <property type="match status" value="1"/>
</dbReference>
<dbReference type="PRINTS" id="PR00100">
    <property type="entry name" value="AOTCASE"/>
</dbReference>
<dbReference type="PRINTS" id="PR00102">
    <property type="entry name" value="OTCASE"/>
</dbReference>
<dbReference type="SUPFAM" id="SSF53671">
    <property type="entry name" value="Aspartate/ornithine carbamoyltransferase"/>
    <property type="match status" value="1"/>
</dbReference>
<dbReference type="PROSITE" id="PS00097">
    <property type="entry name" value="CARBAMOYLTRANSFERASE"/>
    <property type="match status" value="1"/>
</dbReference>
<reference key="1">
    <citation type="submission" date="2003-03" db="EMBL/GenBank/DDBJ databases">
        <title>The complete genome sequence of Neisseria gonorrhoeae.</title>
        <authorList>
            <person name="Lewis L.A."/>
            <person name="Gillaspy A.F."/>
            <person name="McLaughlin R.E."/>
            <person name="Gipson M."/>
            <person name="Ducey T.F."/>
            <person name="Ownbey T."/>
            <person name="Hartman K."/>
            <person name="Nydick C."/>
            <person name="Carson M.B."/>
            <person name="Vaughn J."/>
            <person name="Thomson C."/>
            <person name="Song L."/>
            <person name="Lin S."/>
            <person name="Yuan X."/>
            <person name="Najar F."/>
            <person name="Zhan M."/>
            <person name="Ren Q."/>
            <person name="Zhu H."/>
            <person name="Qi S."/>
            <person name="Kenton S.M."/>
            <person name="Lai H."/>
            <person name="White J.D."/>
            <person name="Clifton S."/>
            <person name="Roe B.A."/>
            <person name="Dyer D.W."/>
        </authorList>
    </citation>
    <scope>NUCLEOTIDE SEQUENCE [LARGE SCALE GENOMIC DNA]</scope>
    <source>
        <strain>ATCC 700825 / FA 1090</strain>
    </source>
</reference>
<feature type="chain" id="PRO_1000065106" description="Ornithine carbamoyltransferase">
    <location>
        <begin position="1"/>
        <end position="331"/>
    </location>
</feature>
<feature type="binding site" evidence="2">
    <location>
        <begin position="55"/>
        <end position="58"/>
    </location>
    <ligand>
        <name>carbamoyl phosphate</name>
        <dbReference type="ChEBI" id="CHEBI:58228"/>
    </ligand>
</feature>
<feature type="binding site" evidence="2">
    <location>
        <position position="82"/>
    </location>
    <ligand>
        <name>carbamoyl phosphate</name>
        <dbReference type="ChEBI" id="CHEBI:58228"/>
    </ligand>
</feature>
<feature type="binding site" evidence="2">
    <location>
        <position position="106"/>
    </location>
    <ligand>
        <name>carbamoyl phosphate</name>
        <dbReference type="ChEBI" id="CHEBI:58228"/>
    </ligand>
</feature>
<feature type="binding site" evidence="2">
    <location>
        <begin position="133"/>
        <end position="136"/>
    </location>
    <ligand>
        <name>carbamoyl phosphate</name>
        <dbReference type="ChEBI" id="CHEBI:58228"/>
    </ligand>
</feature>
<feature type="binding site" evidence="2">
    <location>
        <position position="166"/>
    </location>
    <ligand>
        <name>L-ornithine</name>
        <dbReference type="ChEBI" id="CHEBI:46911"/>
    </ligand>
</feature>
<feature type="binding site" evidence="2">
    <location>
        <position position="230"/>
    </location>
    <ligand>
        <name>L-ornithine</name>
        <dbReference type="ChEBI" id="CHEBI:46911"/>
    </ligand>
</feature>
<feature type="binding site" evidence="2">
    <location>
        <begin position="234"/>
        <end position="235"/>
    </location>
    <ligand>
        <name>L-ornithine</name>
        <dbReference type="ChEBI" id="CHEBI:46911"/>
    </ligand>
</feature>
<feature type="binding site" evidence="2">
    <location>
        <begin position="272"/>
        <end position="273"/>
    </location>
    <ligand>
        <name>carbamoyl phosphate</name>
        <dbReference type="ChEBI" id="CHEBI:58228"/>
    </ligand>
</feature>
<feature type="binding site" evidence="2">
    <location>
        <position position="317"/>
    </location>
    <ligand>
        <name>carbamoyl phosphate</name>
        <dbReference type="ChEBI" id="CHEBI:58228"/>
    </ligand>
</feature>
<sequence length="331" mass="36677">MNLKNRHFLKLLDFTPEEITTYLDLAAELKDAKKAGREIQRMKGKNIALIFEKTSTRTRCAFEVAARDQGADATYLEPSASQIGHKESIKDTARVLGRMYDAIEYRGFAQETVEELAKYAGVPVFNGLTNEFHPTQMLADALTMREHSGKPLNQTAFAYVGDARYNMGNSLLILGAKLGMDVRIGAPQSLWPSEGIIAAAHAAAKETGAKITLTENAHEAVKGVGFIHTDVWVSMGEPKEVWQERIDLLKDYRVTPELMAASGNPQVKFMHCLPAFHNRETKVGEWIYETFGLNGVEVTEEVFESPAGIVFDQAENRMHTIKAVMVAALGD</sequence>
<evidence type="ECO:0000250" key="1"/>
<evidence type="ECO:0000255" key="2">
    <source>
        <dbReference type="HAMAP-Rule" id="MF_01109"/>
    </source>
</evidence>
<accession>Q5F7E6</accession>
<keyword id="KW-0028">Amino-acid biosynthesis</keyword>
<keyword id="KW-0055">Arginine biosynthesis</keyword>
<keyword id="KW-0963">Cytoplasm</keyword>
<keyword id="KW-1185">Reference proteome</keyword>
<keyword id="KW-0808">Transferase</keyword>
<proteinExistence type="inferred from homology"/>
<organism>
    <name type="scientific">Neisseria gonorrhoeae (strain ATCC 700825 / FA 1090)</name>
    <dbReference type="NCBI Taxonomy" id="242231"/>
    <lineage>
        <taxon>Bacteria</taxon>
        <taxon>Pseudomonadati</taxon>
        <taxon>Pseudomonadota</taxon>
        <taxon>Betaproteobacteria</taxon>
        <taxon>Neisseriales</taxon>
        <taxon>Neisseriaceae</taxon>
        <taxon>Neisseria</taxon>
    </lineage>
</organism>
<protein>
    <recommendedName>
        <fullName evidence="2">Ornithine carbamoyltransferase</fullName>
        <shortName evidence="2">OTCase</shortName>
        <ecNumber evidence="2">2.1.3.3</ecNumber>
    </recommendedName>
</protein>
<comment type="function">
    <text evidence="1">Reversibly catalyzes the transfer of the carbamoyl group from carbamoyl phosphate (CP) to the N(epsilon) atom of ornithine (ORN) to produce L-citrulline.</text>
</comment>
<comment type="catalytic activity">
    <reaction evidence="2">
        <text>carbamoyl phosphate + L-ornithine = L-citrulline + phosphate + H(+)</text>
        <dbReference type="Rhea" id="RHEA:19513"/>
        <dbReference type="ChEBI" id="CHEBI:15378"/>
        <dbReference type="ChEBI" id="CHEBI:43474"/>
        <dbReference type="ChEBI" id="CHEBI:46911"/>
        <dbReference type="ChEBI" id="CHEBI:57743"/>
        <dbReference type="ChEBI" id="CHEBI:58228"/>
        <dbReference type="EC" id="2.1.3.3"/>
    </reaction>
</comment>
<comment type="pathway">
    <text evidence="2">Amino-acid biosynthesis; L-arginine biosynthesis; L-arginine from L-ornithine and carbamoyl phosphate: step 1/3.</text>
</comment>
<comment type="subcellular location">
    <subcellularLocation>
        <location evidence="2">Cytoplasm</location>
    </subcellularLocation>
</comment>
<comment type="similarity">
    <text evidence="2">Belongs to the aspartate/ornithine carbamoyltransferase superfamily. OTCase family.</text>
</comment>
<name>OTC_NEIG1</name>
<gene>
    <name evidence="2" type="primary">argF</name>
    <name type="ordered locus">NGO_1232</name>
</gene>